<sequence>MSNQGEYPEDNRVGKHEPHDLSLTRRDLIKVSAATAAAAVVYPHSTLAASVPAATPAPEIMPLTLKVNGKTEQLEVDTRTTLLDALRENLHLIGTKKGCDHGQCGACTVLVNGRRLNACLTLAVMHQGAEITTIEGLGSPDNLHPMQAAFIKHDGFQCGYCTSGQICSSVAVLKEIQDGIPSHVTVDLVSPPERTADEIRERMSGNICRCGAYANILAAIEDAAGEIKS</sequence>
<gene>
    <name evidence="1" type="primary">paoA</name>
    <name type="synonym">yagT</name>
    <name type="ordered locus">Z0352</name>
    <name type="ordered locus">ECs0316</name>
</gene>
<feature type="signal peptide" description="Tat-type signal" evidence="3">
    <location>
        <begin position="1"/>
        <end position="53"/>
    </location>
</feature>
<feature type="chain" id="PRO_0000189415" description="Aldehyde oxidoreductase iron-sulfur-binding subunit PaoA">
    <location>
        <begin position="54"/>
        <end position="229"/>
    </location>
</feature>
<feature type="domain" description="2Fe-2S ferredoxin-type" evidence="2">
    <location>
        <begin position="61"/>
        <end position="137"/>
    </location>
</feature>
<feature type="region of interest" description="Disordered" evidence="4">
    <location>
        <begin position="1"/>
        <end position="21"/>
    </location>
</feature>
<feature type="compositionally biased region" description="Basic and acidic residues" evidence="4">
    <location>
        <begin position="9"/>
        <end position="21"/>
    </location>
</feature>
<feature type="binding site" evidence="1">
    <location>
        <position position="99"/>
    </location>
    <ligand>
        <name>[2Fe-2S] cluster</name>
        <dbReference type="ChEBI" id="CHEBI:190135"/>
        <label>1</label>
    </ligand>
</feature>
<feature type="binding site" evidence="1">
    <location>
        <position position="104"/>
    </location>
    <ligand>
        <name>[2Fe-2S] cluster</name>
        <dbReference type="ChEBI" id="CHEBI:190135"/>
        <label>1</label>
    </ligand>
</feature>
<feature type="binding site" evidence="1">
    <location>
        <position position="105"/>
    </location>
    <ligand>
        <name>[2Fe-2S] cluster</name>
        <dbReference type="ChEBI" id="CHEBI:190135"/>
        <label>1</label>
    </ligand>
</feature>
<feature type="binding site" evidence="1">
    <location>
        <position position="107"/>
    </location>
    <ligand>
        <name>[2Fe-2S] cluster</name>
        <dbReference type="ChEBI" id="CHEBI:190135"/>
        <label>1</label>
    </ligand>
</feature>
<feature type="binding site" evidence="1">
    <location>
        <position position="119"/>
    </location>
    <ligand>
        <name>[2Fe-2S] cluster</name>
        <dbReference type="ChEBI" id="CHEBI:190135"/>
        <label>1</label>
    </ligand>
</feature>
<feature type="binding site" evidence="1">
    <location>
        <position position="158"/>
    </location>
    <ligand>
        <name>[2Fe-2S] cluster</name>
        <dbReference type="ChEBI" id="CHEBI:190135"/>
        <label>2</label>
    </ligand>
</feature>
<feature type="binding site" evidence="1">
    <location>
        <position position="161"/>
    </location>
    <ligand>
        <name>[2Fe-2S] cluster</name>
        <dbReference type="ChEBI" id="CHEBI:190135"/>
        <label>2</label>
    </ligand>
</feature>
<feature type="binding site" evidence="1">
    <location>
        <position position="208"/>
    </location>
    <ligand>
        <name>[2Fe-2S] cluster</name>
        <dbReference type="ChEBI" id="CHEBI:190135"/>
        <label>2</label>
    </ligand>
</feature>
<feature type="binding site" evidence="1">
    <location>
        <position position="210"/>
    </location>
    <ligand>
        <name>[2Fe-2S] cluster</name>
        <dbReference type="ChEBI" id="CHEBI:190135"/>
        <label>2</label>
    </ligand>
</feature>
<dbReference type="EC" id="1.2.99.6" evidence="1"/>
<dbReference type="EMBL" id="AE005174">
    <property type="protein sequence ID" value="AAG54611.1"/>
    <property type="molecule type" value="Genomic_DNA"/>
</dbReference>
<dbReference type="EMBL" id="BA000007">
    <property type="protein sequence ID" value="BAB33739.1"/>
    <property type="molecule type" value="Genomic_DNA"/>
</dbReference>
<dbReference type="PIR" id="D90668">
    <property type="entry name" value="D90668"/>
</dbReference>
<dbReference type="PIR" id="G85518">
    <property type="entry name" value="G85518"/>
</dbReference>
<dbReference type="RefSeq" id="NP_308343.1">
    <property type="nucleotide sequence ID" value="NC_002695.1"/>
</dbReference>
<dbReference type="RefSeq" id="WP_000070685.1">
    <property type="nucleotide sequence ID" value="NZ_VOAI01000033.1"/>
</dbReference>
<dbReference type="SMR" id="Q8X6I9"/>
<dbReference type="STRING" id="155864.Z0352"/>
<dbReference type="GeneID" id="914415"/>
<dbReference type="KEGG" id="ece:Z0352"/>
<dbReference type="KEGG" id="ecs:ECs_0316"/>
<dbReference type="PATRIC" id="fig|386585.9.peg.410"/>
<dbReference type="eggNOG" id="COG2080">
    <property type="taxonomic scope" value="Bacteria"/>
</dbReference>
<dbReference type="HOGENOM" id="CLU_052511_1_0_6"/>
<dbReference type="OMA" id="RCTGYGG"/>
<dbReference type="Proteomes" id="UP000000558">
    <property type="component" value="Chromosome"/>
</dbReference>
<dbReference type="Proteomes" id="UP000002519">
    <property type="component" value="Chromosome"/>
</dbReference>
<dbReference type="GO" id="GO:0042597">
    <property type="term" value="C:periplasmic space"/>
    <property type="evidence" value="ECO:0007669"/>
    <property type="project" value="UniProtKB-SubCell"/>
</dbReference>
<dbReference type="GO" id="GO:0051537">
    <property type="term" value="F:2 iron, 2 sulfur cluster binding"/>
    <property type="evidence" value="ECO:0007669"/>
    <property type="project" value="UniProtKB-KW"/>
</dbReference>
<dbReference type="GO" id="GO:0047770">
    <property type="term" value="F:carboxylate reductase activity"/>
    <property type="evidence" value="ECO:0007669"/>
    <property type="project" value="UniProtKB-EC"/>
</dbReference>
<dbReference type="GO" id="GO:0046872">
    <property type="term" value="F:metal ion binding"/>
    <property type="evidence" value="ECO:0007669"/>
    <property type="project" value="UniProtKB-KW"/>
</dbReference>
<dbReference type="CDD" id="cd00207">
    <property type="entry name" value="fer2"/>
    <property type="match status" value="1"/>
</dbReference>
<dbReference type="FunFam" id="1.10.150.120:FF:000005">
    <property type="entry name" value="Aldehyde dehydrogenase iron-sulfur subunit"/>
    <property type="match status" value="1"/>
</dbReference>
<dbReference type="FunFam" id="3.10.20.30:FF:000020">
    <property type="entry name" value="Xanthine dehydrogenase iron-sulfur subunit"/>
    <property type="match status" value="1"/>
</dbReference>
<dbReference type="Gene3D" id="3.10.20.30">
    <property type="match status" value="1"/>
</dbReference>
<dbReference type="Gene3D" id="1.10.150.120">
    <property type="entry name" value="[2Fe-2S]-binding domain"/>
    <property type="match status" value="1"/>
</dbReference>
<dbReference type="InterPro" id="IPR002888">
    <property type="entry name" value="2Fe-2S-bd"/>
</dbReference>
<dbReference type="InterPro" id="IPR036884">
    <property type="entry name" value="2Fe-2S-bd_dom_sf"/>
</dbReference>
<dbReference type="InterPro" id="IPR036010">
    <property type="entry name" value="2Fe-2S_ferredoxin-like_sf"/>
</dbReference>
<dbReference type="InterPro" id="IPR001041">
    <property type="entry name" value="2Fe-2S_ferredoxin-type"/>
</dbReference>
<dbReference type="InterPro" id="IPR006058">
    <property type="entry name" value="2Fe2S_fd_BS"/>
</dbReference>
<dbReference type="InterPro" id="IPR052914">
    <property type="entry name" value="Aldehyde_Oxdr_Iron-Sulfur"/>
</dbReference>
<dbReference type="InterPro" id="IPR012675">
    <property type="entry name" value="Beta-grasp_dom_sf"/>
</dbReference>
<dbReference type="InterPro" id="IPR006311">
    <property type="entry name" value="TAT_signal"/>
</dbReference>
<dbReference type="InterPro" id="IPR019546">
    <property type="entry name" value="TAT_signal_bac_arc"/>
</dbReference>
<dbReference type="NCBIfam" id="NF008514">
    <property type="entry name" value="PRK11433.1"/>
    <property type="match status" value="1"/>
</dbReference>
<dbReference type="NCBIfam" id="TIGR01409">
    <property type="entry name" value="TAT_signal_seq"/>
    <property type="match status" value="1"/>
</dbReference>
<dbReference type="PANTHER" id="PTHR45331:SF1">
    <property type="entry name" value="ALDEHYDE OXIDOREDUCTASE IRON-SULFUR-BINDING SUBUNIT PAOA"/>
    <property type="match status" value="1"/>
</dbReference>
<dbReference type="PANTHER" id="PTHR45331">
    <property type="entry name" value="OXIDOREDUCTASE, IRON-SULPHUR BINDING SUBUNIT-RELATED-RELATED"/>
    <property type="match status" value="1"/>
</dbReference>
<dbReference type="Pfam" id="PF00111">
    <property type="entry name" value="Fer2"/>
    <property type="match status" value="1"/>
</dbReference>
<dbReference type="Pfam" id="PF01799">
    <property type="entry name" value="Fer2_2"/>
    <property type="match status" value="1"/>
</dbReference>
<dbReference type="SUPFAM" id="SSF54292">
    <property type="entry name" value="2Fe-2S ferredoxin-like"/>
    <property type="match status" value="1"/>
</dbReference>
<dbReference type="SUPFAM" id="SSF47741">
    <property type="entry name" value="CO dehydrogenase ISP C-domain like"/>
    <property type="match status" value="1"/>
</dbReference>
<dbReference type="PROSITE" id="PS00197">
    <property type="entry name" value="2FE2S_FER_1"/>
    <property type="match status" value="1"/>
</dbReference>
<dbReference type="PROSITE" id="PS51085">
    <property type="entry name" value="2FE2S_FER_2"/>
    <property type="match status" value="1"/>
</dbReference>
<dbReference type="PROSITE" id="PS51318">
    <property type="entry name" value="TAT"/>
    <property type="match status" value="1"/>
</dbReference>
<comment type="function">
    <text evidence="1">Oxidizes aldehydes to the corresponding carboxylic acids with a preference for aromatic aldehydes. It might play a role in the detoxification of aldehydes to avoid cell damage.</text>
</comment>
<comment type="catalytic activity">
    <reaction evidence="1">
        <text>an aldehyde + A + H2O = a carboxylate + AH2 + H(+)</text>
        <dbReference type="Rhea" id="RHEA:56856"/>
        <dbReference type="ChEBI" id="CHEBI:13193"/>
        <dbReference type="ChEBI" id="CHEBI:15377"/>
        <dbReference type="ChEBI" id="CHEBI:15378"/>
        <dbReference type="ChEBI" id="CHEBI:17478"/>
        <dbReference type="ChEBI" id="CHEBI:17499"/>
        <dbReference type="ChEBI" id="CHEBI:29067"/>
        <dbReference type="EC" id="1.2.99.6"/>
    </reaction>
</comment>
<comment type="cofactor">
    <cofactor evidence="1">
        <name>[2Fe-2S] cluster</name>
        <dbReference type="ChEBI" id="CHEBI:190135"/>
    </cofactor>
    <text evidence="1">Binds 2 [2Fe-2S] clusters.</text>
</comment>
<comment type="subunit">
    <text evidence="1">Heterotrimer composed of PaoA, PaoB and PaoC.</text>
</comment>
<comment type="subcellular location">
    <subcellularLocation>
        <location evidence="1">Periplasm</location>
    </subcellularLocation>
</comment>
<comment type="PTM">
    <text evidence="1 5">Exported by the Tat system (By similarity). The position of the signal peptide cleavage has not been experimentally proven (Probable).</text>
</comment>
<reference key="1">
    <citation type="journal article" date="2001" name="Nature">
        <title>Genome sequence of enterohaemorrhagic Escherichia coli O157:H7.</title>
        <authorList>
            <person name="Perna N.T."/>
            <person name="Plunkett G. III"/>
            <person name="Burland V."/>
            <person name="Mau B."/>
            <person name="Glasner J.D."/>
            <person name="Rose D.J."/>
            <person name="Mayhew G.F."/>
            <person name="Evans P.S."/>
            <person name="Gregor J."/>
            <person name="Kirkpatrick H.A."/>
            <person name="Posfai G."/>
            <person name="Hackett J."/>
            <person name="Klink S."/>
            <person name="Boutin A."/>
            <person name="Shao Y."/>
            <person name="Miller L."/>
            <person name="Grotbeck E.J."/>
            <person name="Davis N.W."/>
            <person name="Lim A."/>
            <person name="Dimalanta E.T."/>
            <person name="Potamousis K."/>
            <person name="Apodaca J."/>
            <person name="Anantharaman T.S."/>
            <person name="Lin J."/>
            <person name="Yen G."/>
            <person name="Schwartz D.C."/>
            <person name="Welch R.A."/>
            <person name="Blattner F.R."/>
        </authorList>
    </citation>
    <scope>NUCLEOTIDE SEQUENCE [LARGE SCALE GENOMIC DNA]</scope>
    <source>
        <strain>O157:H7 / EDL933 / ATCC 700927 / EHEC</strain>
    </source>
</reference>
<reference key="2">
    <citation type="journal article" date="2001" name="DNA Res.">
        <title>Complete genome sequence of enterohemorrhagic Escherichia coli O157:H7 and genomic comparison with a laboratory strain K-12.</title>
        <authorList>
            <person name="Hayashi T."/>
            <person name="Makino K."/>
            <person name="Ohnishi M."/>
            <person name="Kurokawa K."/>
            <person name="Ishii K."/>
            <person name="Yokoyama K."/>
            <person name="Han C.-G."/>
            <person name="Ohtsubo E."/>
            <person name="Nakayama K."/>
            <person name="Murata T."/>
            <person name="Tanaka M."/>
            <person name="Tobe T."/>
            <person name="Iida T."/>
            <person name="Takami H."/>
            <person name="Honda T."/>
            <person name="Sasakawa C."/>
            <person name="Ogasawara N."/>
            <person name="Yasunaga T."/>
            <person name="Kuhara S."/>
            <person name="Shiba T."/>
            <person name="Hattori M."/>
            <person name="Shinagawa H."/>
        </authorList>
    </citation>
    <scope>NUCLEOTIDE SEQUENCE [LARGE SCALE GENOMIC DNA]</scope>
    <source>
        <strain>O157:H7 / Sakai / RIMD 0509952 / EHEC</strain>
    </source>
</reference>
<keyword id="KW-0001">2Fe-2S</keyword>
<keyword id="KW-0408">Iron</keyword>
<keyword id="KW-0411">Iron-sulfur</keyword>
<keyword id="KW-0479">Metal-binding</keyword>
<keyword id="KW-0560">Oxidoreductase</keyword>
<keyword id="KW-0574">Periplasm</keyword>
<keyword id="KW-1185">Reference proteome</keyword>
<keyword id="KW-0732">Signal</keyword>
<organism>
    <name type="scientific">Escherichia coli O157:H7</name>
    <dbReference type="NCBI Taxonomy" id="83334"/>
    <lineage>
        <taxon>Bacteria</taxon>
        <taxon>Pseudomonadati</taxon>
        <taxon>Pseudomonadota</taxon>
        <taxon>Gammaproteobacteria</taxon>
        <taxon>Enterobacterales</taxon>
        <taxon>Enterobacteriaceae</taxon>
        <taxon>Escherichia</taxon>
    </lineage>
</organism>
<proteinExistence type="inferred from homology"/>
<name>PAOA_ECO57</name>
<evidence type="ECO:0000250" key="1">
    <source>
        <dbReference type="UniProtKB" id="P77165"/>
    </source>
</evidence>
<evidence type="ECO:0000255" key="2">
    <source>
        <dbReference type="PROSITE-ProRule" id="PRU00465"/>
    </source>
</evidence>
<evidence type="ECO:0000255" key="3">
    <source>
        <dbReference type="PROSITE-ProRule" id="PRU00648"/>
    </source>
</evidence>
<evidence type="ECO:0000256" key="4">
    <source>
        <dbReference type="SAM" id="MobiDB-lite"/>
    </source>
</evidence>
<evidence type="ECO:0000305" key="5"/>
<accession>Q8X6I9</accession>
<protein>
    <recommendedName>
        <fullName evidence="1">Aldehyde oxidoreductase iron-sulfur-binding subunit PaoA</fullName>
        <ecNumber evidence="1">1.2.99.6</ecNumber>
    </recommendedName>
</protein>